<proteinExistence type="evidence at transcript level"/>
<organism>
    <name type="scientific">Arabidopsis thaliana</name>
    <name type="common">Mouse-ear cress</name>
    <dbReference type="NCBI Taxonomy" id="3702"/>
    <lineage>
        <taxon>Eukaryota</taxon>
        <taxon>Viridiplantae</taxon>
        <taxon>Streptophyta</taxon>
        <taxon>Embryophyta</taxon>
        <taxon>Tracheophyta</taxon>
        <taxon>Spermatophyta</taxon>
        <taxon>Magnoliopsida</taxon>
        <taxon>eudicotyledons</taxon>
        <taxon>Gunneridae</taxon>
        <taxon>Pentapetalae</taxon>
        <taxon>rosids</taxon>
        <taxon>malvids</taxon>
        <taxon>Brassicales</taxon>
        <taxon>Brassicaceae</taxon>
        <taxon>Camelineae</taxon>
        <taxon>Arabidopsis</taxon>
    </lineage>
</organism>
<feature type="chain" id="PRO_0000124802" description="24-methylenesterol C-methyltransferase 3">
    <location>
        <begin position="1"/>
        <end position="359"/>
    </location>
</feature>
<feature type="transmembrane region" description="Helical" evidence="1">
    <location>
        <begin position="4"/>
        <end position="24"/>
    </location>
</feature>
<feature type="sequence conflict" description="In Ref. 1; AAB62809." evidence="3" ref="1">
    <original>I</original>
    <variation>T</variation>
    <location>
        <position position="84"/>
    </location>
</feature>
<gene>
    <name type="primary">SMT3</name>
    <name type="ordered locus">At1g76090</name>
    <name type="ORF">T23E18.40</name>
</gene>
<sequence>MDSVALYCTAGLIAGAVYWFICVLGPAERKGKRASDLSGGSISAEKVKDNYNQYWSFFRKPKEIESAEKVPDFVDTFYNLVTDIYEWGWGQSFHFSPHVPGKSDKDATRIHEEMAVDLIKVKPGQKILDAGCGVGGPMRAIAAHSKAQVTGITINEYQVQRAKLHNKKAGLDSLCNVVCGNFLKMPFDENTFDGAYSIEATCHAPKLEEVYSEIFRVMKPGSLFVSYEWVTTEKYRDDDEEHKDVIQGIERGDALPGLRSYADIAVTAKKVGFEVVKEKDLAKPPSKPWWNRLKMGRIAYWRNHVVVVILSAIGVAPKGTVDVHKMLFKTADYLTRGGETGIFSPMHMILCRKPEKASE</sequence>
<protein>
    <recommendedName>
        <fullName>24-methylenesterol C-methyltransferase 3</fullName>
        <shortName>24-sterol C-methyltransferase 3</shortName>
        <shortName>Sterol-C-methyltransferase 3</shortName>
        <ecNumber>2.1.1.143</ecNumber>
    </recommendedName>
</protein>
<evidence type="ECO:0000255" key="1"/>
<evidence type="ECO:0000255" key="2">
    <source>
        <dbReference type="PROSITE-ProRule" id="PRU01022"/>
    </source>
</evidence>
<evidence type="ECO:0000305" key="3"/>
<name>SMT3B_ARATH</name>
<accession>Q94JS4</accession>
<accession>O23655</accession>
<reference key="1">
    <citation type="journal article" date="1997" name="Eur. J. Biochem.">
        <title>Identification of cDNAs encoding sterol methyl-transferases involved in the second methylation step of plant sterol biosynthesis.</title>
        <authorList>
            <person name="Bouvier-Nave P."/>
            <person name="Husselstein T."/>
            <person name="Desprez T."/>
            <person name="Benveniste P."/>
        </authorList>
    </citation>
    <scope>NUCLEOTIDE SEQUENCE [MRNA]</scope>
    <source>
        <strain>cv. Columbia</strain>
        <tissue>Seedling</tissue>
    </source>
</reference>
<reference key="2">
    <citation type="journal article" date="2000" name="Nature">
        <title>Sequence and analysis of chromosome 1 of the plant Arabidopsis thaliana.</title>
        <authorList>
            <person name="Theologis A."/>
            <person name="Ecker J.R."/>
            <person name="Palm C.J."/>
            <person name="Federspiel N.A."/>
            <person name="Kaul S."/>
            <person name="White O."/>
            <person name="Alonso J."/>
            <person name="Altafi H."/>
            <person name="Araujo R."/>
            <person name="Bowman C.L."/>
            <person name="Brooks S.Y."/>
            <person name="Buehler E."/>
            <person name="Chan A."/>
            <person name="Chao Q."/>
            <person name="Chen H."/>
            <person name="Cheuk R.F."/>
            <person name="Chin C.W."/>
            <person name="Chung M.K."/>
            <person name="Conn L."/>
            <person name="Conway A.B."/>
            <person name="Conway A.R."/>
            <person name="Creasy T.H."/>
            <person name="Dewar K."/>
            <person name="Dunn P."/>
            <person name="Etgu P."/>
            <person name="Feldblyum T.V."/>
            <person name="Feng J.-D."/>
            <person name="Fong B."/>
            <person name="Fujii C.Y."/>
            <person name="Gill J.E."/>
            <person name="Goldsmith A.D."/>
            <person name="Haas B."/>
            <person name="Hansen N.F."/>
            <person name="Hughes B."/>
            <person name="Huizar L."/>
            <person name="Hunter J.L."/>
            <person name="Jenkins J."/>
            <person name="Johnson-Hopson C."/>
            <person name="Khan S."/>
            <person name="Khaykin E."/>
            <person name="Kim C.J."/>
            <person name="Koo H.L."/>
            <person name="Kremenetskaia I."/>
            <person name="Kurtz D.B."/>
            <person name="Kwan A."/>
            <person name="Lam B."/>
            <person name="Langin-Hooper S."/>
            <person name="Lee A."/>
            <person name="Lee J.M."/>
            <person name="Lenz C.A."/>
            <person name="Li J.H."/>
            <person name="Li Y.-P."/>
            <person name="Lin X."/>
            <person name="Liu S.X."/>
            <person name="Liu Z.A."/>
            <person name="Luros J.S."/>
            <person name="Maiti R."/>
            <person name="Marziali A."/>
            <person name="Militscher J."/>
            <person name="Miranda M."/>
            <person name="Nguyen M."/>
            <person name="Nierman W.C."/>
            <person name="Osborne B.I."/>
            <person name="Pai G."/>
            <person name="Peterson J."/>
            <person name="Pham P.K."/>
            <person name="Rizzo M."/>
            <person name="Rooney T."/>
            <person name="Rowley D."/>
            <person name="Sakano H."/>
            <person name="Salzberg S.L."/>
            <person name="Schwartz J.R."/>
            <person name="Shinn P."/>
            <person name="Southwick A.M."/>
            <person name="Sun H."/>
            <person name="Tallon L.J."/>
            <person name="Tambunga G."/>
            <person name="Toriumi M.J."/>
            <person name="Town C.D."/>
            <person name="Utterback T."/>
            <person name="Van Aken S."/>
            <person name="Vaysberg M."/>
            <person name="Vysotskaia V.S."/>
            <person name="Walker M."/>
            <person name="Wu D."/>
            <person name="Yu G."/>
            <person name="Fraser C.M."/>
            <person name="Venter J.C."/>
            <person name="Davis R.W."/>
        </authorList>
    </citation>
    <scope>NUCLEOTIDE SEQUENCE [LARGE SCALE GENOMIC DNA]</scope>
    <source>
        <strain>cv. Columbia</strain>
    </source>
</reference>
<reference key="3">
    <citation type="journal article" date="2017" name="Plant J.">
        <title>Araport11: a complete reannotation of the Arabidopsis thaliana reference genome.</title>
        <authorList>
            <person name="Cheng C.Y."/>
            <person name="Krishnakumar V."/>
            <person name="Chan A.P."/>
            <person name="Thibaud-Nissen F."/>
            <person name="Schobel S."/>
            <person name="Town C.D."/>
        </authorList>
    </citation>
    <scope>GENOME REANNOTATION</scope>
    <source>
        <strain>cv. Columbia</strain>
    </source>
</reference>
<reference key="4">
    <citation type="journal article" date="2003" name="Science">
        <title>Empirical analysis of transcriptional activity in the Arabidopsis genome.</title>
        <authorList>
            <person name="Yamada K."/>
            <person name="Lim J."/>
            <person name="Dale J.M."/>
            <person name="Chen H."/>
            <person name="Shinn P."/>
            <person name="Palm C.J."/>
            <person name="Southwick A.M."/>
            <person name="Wu H.C."/>
            <person name="Kim C.J."/>
            <person name="Nguyen M."/>
            <person name="Pham P.K."/>
            <person name="Cheuk R.F."/>
            <person name="Karlin-Newmann G."/>
            <person name="Liu S.X."/>
            <person name="Lam B."/>
            <person name="Sakano H."/>
            <person name="Wu T."/>
            <person name="Yu G."/>
            <person name="Miranda M."/>
            <person name="Quach H.L."/>
            <person name="Tripp M."/>
            <person name="Chang C.H."/>
            <person name="Lee J.M."/>
            <person name="Toriumi M.J."/>
            <person name="Chan M.M."/>
            <person name="Tang C.C."/>
            <person name="Onodera C.S."/>
            <person name="Deng J.M."/>
            <person name="Akiyama K."/>
            <person name="Ansari Y."/>
            <person name="Arakawa T."/>
            <person name="Banh J."/>
            <person name="Banno F."/>
            <person name="Bowser L."/>
            <person name="Brooks S.Y."/>
            <person name="Carninci P."/>
            <person name="Chao Q."/>
            <person name="Choy N."/>
            <person name="Enju A."/>
            <person name="Goldsmith A.D."/>
            <person name="Gurjal M."/>
            <person name="Hansen N.F."/>
            <person name="Hayashizaki Y."/>
            <person name="Johnson-Hopson C."/>
            <person name="Hsuan V.W."/>
            <person name="Iida K."/>
            <person name="Karnes M."/>
            <person name="Khan S."/>
            <person name="Koesema E."/>
            <person name="Ishida J."/>
            <person name="Jiang P.X."/>
            <person name="Jones T."/>
            <person name="Kawai J."/>
            <person name="Kamiya A."/>
            <person name="Meyers C."/>
            <person name="Nakajima M."/>
            <person name="Narusaka M."/>
            <person name="Seki M."/>
            <person name="Sakurai T."/>
            <person name="Satou M."/>
            <person name="Tamse R."/>
            <person name="Vaysberg M."/>
            <person name="Wallender E.K."/>
            <person name="Wong C."/>
            <person name="Yamamura Y."/>
            <person name="Yuan S."/>
            <person name="Shinozaki K."/>
            <person name="Davis R.W."/>
            <person name="Theologis A."/>
            <person name="Ecker J.R."/>
        </authorList>
    </citation>
    <scope>NUCLEOTIDE SEQUENCE [LARGE SCALE MRNA]</scope>
    <source>
        <strain>cv. Columbia</strain>
    </source>
</reference>
<dbReference type="EC" id="2.1.1.143"/>
<dbReference type="EMBL" id="U71400">
    <property type="protein sequence ID" value="AAB62809.1"/>
    <property type="molecule type" value="mRNA"/>
</dbReference>
<dbReference type="EMBL" id="AC009978">
    <property type="status" value="NOT_ANNOTATED_CDS"/>
    <property type="molecule type" value="Genomic_DNA"/>
</dbReference>
<dbReference type="EMBL" id="CP002684">
    <property type="protein sequence ID" value="AEE35795.1"/>
    <property type="molecule type" value="Genomic_DNA"/>
</dbReference>
<dbReference type="EMBL" id="AF375397">
    <property type="protein sequence ID" value="AAK52981.1"/>
    <property type="molecule type" value="mRNA"/>
</dbReference>
<dbReference type="EMBL" id="AY113031">
    <property type="protein sequence ID" value="AAM47339.1"/>
    <property type="molecule type" value="mRNA"/>
</dbReference>
<dbReference type="RefSeq" id="NP_177736.1">
    <property type="nucleotide sequence ID" value="NM_106258.4"/>
</dbReference>
<dbReference type="SMR" id="Q94JS4"/>
<dbReference type="BioGRID" id="29160">
    <property type="interactions" value="1"/>
</dbReference>
<dbReference type="FunCoup" id="Q94JS4">
    <property type="interactions" value="4"/>
</dbReference>
<dbReference type="STRING" id="3702.Q94JS4"/>
<dbReference type="iPTMnet" id="Q94JS4"/>
<dbReference type="PaxDb" id="3702-AT1G76090.1"/>
<dbReference type="ProteomicsDB" id="245319"/>
<dbReference type="EnsemblPlants" id="AT1G76090.1">
    <property type="protein sequence ID" value="AT1G76090.1"/>
    <property type="gene ID" value="AT1G76090"/>
</dbReference>
<dbReference type="GeneID" id="843941"/>
<dbReference type="Gramene" id="AT1G76090.1">
    <property type="protein sequence ID" value="AT1G76090.1"/>
    <property type="gene ID" value="AT1G76090"/>
</dbReference>
<dbReference type="KEGG" id="ath:AT1G76090"/>
<dbReference type="Araport" id="AT1G76090"/>
<dbReference type="TAIR" id="AT1G76090">
    <property type="gene designation" value="SMT3"/>
</dbReference>
<dbReference type="eggNOG" id="KOG1269">
    <property type="taxonomic scope" value="Eukaryota"/>
</dbReference>
<dbReference type="HOGENOM" id="CLU_039068_5_2_1"/>
<dbReference type="InParanoid" id="Q94JS4"/>
<dbReference type="OMA" id="MTNSFYD"/>
<dbReference type="OrthoDB" id="4310724at2759"/>
<dbReference type="PhylomeDB" id="Q94JS4"/>
<dbReference type="BioCyc" id="ARA:AT1G76090-MONOMER"/>
<dbReference type="BioCyc" id="MetaCyc:AT1G76090-MONOMER"/>
<dbReference type="UniPathway" id="UPA00766"/>
<dbReference type="PRO" id="PR:Q94JS4"/>
<dbReference type="Proteomes" id="UP000006548">
    <property type="component" value="Chromosome 1"/>
</dbReference>
<dbReference type="ExpressionAtlas" id="Q94JS4">
    <property type="expression patterns" value="baseline and differential"/>
</dbReference>
<dbReference type="GO" id="GO:0005783">
    <property type="term" value="C:endoplasmic reticulum"/>
    <property type="evidence" value="ECO:0007005"/>
    <property type="project" value="TAIR"/>
</dbReference>
<dbReference type="GO" id="GO:0016020">
    <property type="term" value="C:membrane"/>
    <property type="evidence" value="ECO:0007669"/>
    <property type="project" value="UniProtKB-SubCell"/>
</dbReference>
<dbReference type="GO" id="GO:0030797">
    <property type="term" value="F:24-methylenesterol C-methyltransferase activity"/>
    <property type="evidence" value="ECO:0007669"/>
    <property type="project" value="UniProtKB-EC"/>
</dbReference>
<dbReference type="GO" id="GO:0003838">
    <property type="term" value="F:sterol 24-C-methyltransferase activity"/>
    <property type="evidence" value="ECO:0000304"/>
    <property type="project" value="TAIR"/>
</dbReference>
<dbReference type="GO" id="GO:0032259">
    <property type="term" value="P:methylation"/>
    <property type="evidence" value="ECO:0007669"/>
    <property type="project" value="UniProtKB-KW"/>
</dbReference>
<dbReference type="GO" id="GO:0016126">
    <property type="term" value="P:sterol biosynthetic process"/>
    <property type="evidence" value="ECO:0000304"/>
    <property type="project" value="TAIR"/>
</dbReference>
<dbReference type="CDD" id="cd02440">
    <property type="entry name" value="AdoMet_MTases"/>
    <property type="match status" value="1"/>
</dbReference>
<dbReference type="FunFam" id="3.40.50.150:FF:000168">
    <property type="entry name" value="Methyltransferase"/>
    <property type="match status" value="1"/>
</dbReference>
<dbReference type="Gene3D" id="3.40.50.150">
    <property type="entry name" value="Vaccinia Virus protein VP39"/>
    <property type="match status" value="1"/>
</dbReference>
<dbReference type="InterPro" id="IPR013216">
    <property type="entry name" value="Methyltransf_11"/>
</dbReference>
<dbReference type="InterPro" id="IPR030384">
    <property type="entry name" value="MeTrfase_SMT"/>
</dbReference>
<dbReference type="InterPro" id="IPR029063">
    <property type="entry name" value="SAM-dependent_MTases_sf"/>
</dbReference>
<dbReference type="InterPro" id="IPR013705">
    <property type="entry name" value="Sterol_MeTrfase_C"/>
</dbReference>
<dbReference type="PANTHER" id="PTHR44742">
    <property type="match status" value="1"/>
</dbReference>
<dbReference type="PANTHER" id="PTHR44742:SF5">
    <property type="entry name" value="24-METHYLENESTEROL C-METHYLTRANSFERASE 3"/>
    <property type="match status" value="1"/>
</dbReference>
<dbReference type="Pfam" id="PF08241">
    <property type="entry name" value="Methyltransf_11"/>
    <property type="match status" value="1"/>
</dbReference>
<dbReference type="Pfam" id="PF08498">
    <property type="entry name" value="Sterol_MT_C"/>
    <property type="match status" value="1"/>
</dbReference>
<dbReference type="SUPFAM" id="SSF53335">
    <property type="entry name" value="S-adenosyl-L-methionine-dependent methyltransferases"/>
    <property type="match status" value="1"/>
</dbReference>
<dbReference type="PROSITE" id="PS51685">
    <property type="entry name" value="SAM_MT_ERG6_SMT"/>
    <property type="match status" value="1"/>
</dbReference>
<comment type="function">
    <text>Catalyzes the methyl transfer from S-adenosyl-methionine to the methylene group of 24-methylene lophenol to form 24-ethylidene lophenol.</text>
</comment>
<comment type="catalytic activity">
    <reaction>
        <text>24-methylidenelophenol + S-adenosyl-L-methionine = (Z)-24-ethylidenelophenol + S-adenosyl-L-homocysteine + H(+)</text>
        <dbReference type="Rhea" id="RHEA:21044"/>
        <dbReference type="ChEBI" id="CHEBI:15378"/>
        <dbReference type="ChEBI" id="CHEBI:29107"/>
        <dbReference type="ChEBI" id="CHEBI:33203"/>
        <dbReference type="ChEBI" id="CHEBI:57856"/>
        <dbReference type="ChEBI" id="CHEBI:59789"/>
        <dbReference type="EC" id="2.1.1.143"/>
    </reaction>
</comment>
<comment type="pathway">
    <text>Steroid biosynthesis; sterol biosynthesis.</text>
</comment>
<comment type="subcellular location">
    <subcellularLocation>
        <location evidence="3">Membrane</location>
        <topology evidence="3">Single-pass membrane protein</topology>
    </subcellularLocation>
</comment>
<comment type="similarity">
    <text evidence="2">Belongs to the class I-like SAM-binding methyltransferase superfamily. Erg6/SMT family.</text>
</comment>
<keyword id="KW-0444">Lipid biosynthesis</keyword>
<keyword id="KW-0443">Lipid metabolism</keyword>
<keyword id="KW-0472">Membrane</keyword>
<keyword id="KW-0489">Methyltransferase</keyword>
<keyword id="KW-1185">Reference proteome</keyword>
<keyword id="KW-0949">S-adenosyl-L-methionine</keyword>
<keyword id="KW-0752">Steroid biosynthesis</keyword>
<keyword id="KW-0753">Steroid metabolism</keyword>
<keyword id="KW-0756">Sterol biosynthesis</keyword>
<keyword id="KW-1207">Sterol metabolism</keyword>
<keyword id="KW-0808">Transferase</keyword>
<keyword id="KW-0812">Transmembrane</keyword>
<keyword id="KW-1133">Transmembrane helix</keyword>